<organism>
    <name type="scientific">Mycolicibacterium fortuitum</name>
    <name type="common">Mycobacterium fortuitum</name>
    <dbReference type="NCBI Taxonomy" id="1766"/>
    <lineage>
        <taxon>Bacteria</taxon>
        <taxon>Bacillati</taxon>
        <taxon>Actinomycetota</taxon>
        <taxon>Actinomycetes</taxon>
        <taxon>Mycobacteriales</taxon>
        <taxon>Mycobacteriaceae</taxon>
        <taxon>Mycolicibacterium</taxon>
    </lineage>
</organism>
<keyword id="KW-0131">Cell cycle</keyword>
<keyword id="KW-0132">Cell division</keyword>
<keyword id="KW-0133">Cell shape</keyword>
<keyword id="KW-0961">Cell wall biogenesis/degradation</keyword>
<keyword id="KW-0963">Cytoplasm</keyword>
<keyword id="KW-0573">Peptidoglycan synthesis</keyword>
<keyword id="KW-0808">Transferase</keyword>
<accession>O32858</accession>
<comment type="function">
    <text evidence="1">Cell wall formation. Adds enolpyruvyl to UDP-N-acetylglucosamine (By similarity).</text>
</comment>
<comment type="catalytic activity">
    <reaction>
        <text>phosphoenolpyruvate + UDP-N-acetyl-alpha-D-glucosamine = UDP-N-acetyl-3-O-(1-carboxyvinyl)-alpha-D-glucosamine + phosphate</text>
        <dbReference type="Rhea" id="RHEA:18681"/>
        <dbReference type="ChEBI" id="CHEBI:43474"/>
        <dbReference type="ChEBI" id="CHEBI:57705"/>
        <dbReference type="ChEBI" id="CHEBI:58702"/>
        <dbReference type="ChEBI" id="CHEBI:68483"/>
        <dbReference type="EC" id="2.5.1.7"/>
    </reaction>
</comment>
<comment type="pathway">
    <text>Cell wall biogenesis; peptidoglycan biosynthesis.</text>
</comment>
<comment type="subcellular location">
    <subcellularLocation>
        <location evidence="1">Cytoplasm</location>
    </subcellularLocation>
</comment>
<comment type="similarity">
    <text evidence="3">Belongs to the EPSP synthase family. MurA subfamily.</text>
</comment>
<feature type="chain" id="PRO_0000178894" description="UDP-N-acetylglucosamine 1-carboxyvinyltransferase">
    <location>
        <begin position="1" status="less than"/>
        <end position="113"/>
    </location>
</feature>
<feature type="binding site" evidence="2">
    <location>
        <position position="22"/>
    </location>
    <ligand>
        <name>UDP-N-acetyl-alpha-D-glucosamine</name>
        <dbReference type="ChEBI" id="CHEBI:57705"/>
    </ligand>
</feature>
<feature type="non-terminal residue">
    <location>
        <position position="1"/>
    </location>
</feature>
<reference key="1">
    <citation type="journal article" date="1997" name="J. Bacteriol.">
        <title>Strategies used by pathogenic and nonpathogenic mycobacteria to synthesize rRNA.</title>
        <authorList>
            <person name="Gonzalez-y-Merchand J.A."/>
            <person name="Garcia M.J."/>
            <person name="Gonzalez-Rico S."/>
            <person name="Colston M.J."/>
            <person name="Cox R.A."/>
        </authorList>
    </citation>
    <scope>NUCLEOTIDE SEQUENCE [GENOMIC DNA]</scope>
    <source>
        <strain>ATCC 6841 / DSM 46621 / CIP 104534 / JCM 6387 / KCTC 9510 / NBRC 13159 / NCTC 10394</strain>
    </source>
</reference>
<gene>
    <name type="primary">murA</name>
</gene>
<proteinExistence type="inferred from homology"/>
<protein>
    <recommendedName>
        <fullName>UDP-N-acetylglucosamine 1-carboxyvinyltransferase</fullName>
        <ecNumber>2.5.1.7</ecNumber>
    </recommendedName>
    <alternativeName>
        <fullName>Enoylpyruvate transferase</fullName>
    </alternativeName>
    <alternativeName>
        <fullName>UDP-N-acetylglucosamine enolpyruvyl transferase</fullName>
        <shortName>EPT</shortName>
    </alternativeName>
</protein>
<evidence type="ECO:0000250" key="1"/>
<evidence type="ECO:0000250" key="2">
    <source>
        <dbReference type="UniProtKB" id="P0A749"/>
    </source>
</evidence>
<evidence type="ECO:0000305" key="3"/>
<name>MURA_MYCFO</name>
<dbReference type="EC" id="2.5.1.7"/>
<dbReference type="EMBL" id="X99775">
    <property type="protein sequence ID" value="CAA68119.1"/>
    <property type="molecule type" value="Genomic_DNA"/>
</dbReference>
<dbReference type="SMR" id="O32858"/>
<dbReference type="STRING" id="1766.XA26_43410"/>
<dbReference type="UniPathway" id="UPA00219"/>
<dbReference type="GO" id="GO:0005737">
    <property type="term" value="C:cytoplasm"/>
    <property type="evidence" value="ECO:0007669"/>
    <property type="project" value="UniProtKB-SubCell"/>
</dbReference>
<dbReference type="GO" id="GO:0008760">
    <property type="term" value="F:UDP-N-acetylglucosamine 1-carboxyvinyltransferase activity"/>
    <property type="evidence" value="ECO:0007669"/>
    <property type="project" value="UniProtKB-EC"/>
</dbReference>
<dbReference type="GO" id="GO:0051301">
    <property type="term" value="P:cell division"/>
    <property type="evidence" value="ECO:0007669"/>
    <property type="project" value="UniProtKB-KW"/>
</dbReference>
<dbReference type="GO" id="GO:0071555">
    <property type="term" value="P:cell wall organization"/>
    <property type="evidence" value="ECO:0007669"/>
    <property type="project" value="UniProtKB-KW"/>
</dbReference>
<dbReference type="GO" id="GO:0009252">
    <property type="term" value="P:peptidoglycan biosynthetic process"/>
    <property type="evidence" value="ECO:0007669"/>
    <property type="project" value="UniProtKB-UniPathway"/>
</dbReference>
<dbReference type="GO" id="GO:0008360">
    <property type="term" value="P:regulation of cell shape"/>
    <property type="evidence" value="ECO:0007669"/>
    <property type="project" value="UniProtKB-KW"/>
</dbReference>
<dbReference type="Gene3D" id="3.65.10.10">
    <property type="entry name" value="Enolpyruvate transferase domain"/>
    <property type="match status" value="1"/>
</dbReference>
<dbReference type="InterPro" id="IPR001986">
    <property type="entry name" value="Enolpyruvate_Tfrase_dom"/>
</dbReference>
<dbReference type="InterPro" id="IPR036968">
    <property type="entry name" value="Enolpyruvate_Tfrase_sf"/>
</dbReference>
<dbReference type="InterPro" id="IPR050068">
    <property type="entry name" value="MurA_subfamily"/>
</dbReference>
<dbReference type="InterPro" id="IPR013792">
    <property type="entry name" value="RNA3'P_cycl/enolpyr_Trfase_a/b"/>
</dbReference>
<dbReference type="PANTHER" id="PTHR43783">
    <property type="entry name" value="UDP-N-ACETYLGLUCOSAMINE 1-CARBOXYVINYLTRANSFERASE"/>
    <property type="match status" value="1"/>
</dbReference>
<dbReference type="PANTHER" id="PTHR43783:SF1">
    <property type="entry name" value="UDP-N-ACETYLGLUCOSAMINE 1-CARBOXYVINYLTRANSFERASE"/>
    <property type="match status" value="1"/>
</dbReference>
<dbReference type="Pfam" id="PF00275">
    <property type="entry name" value="EPSP_synthase"/>
    <property type="match status" value="1"/>
</dbReference>
<dbReference type="SUPFAM" id="SSF55205">
    <property type="entry name" value="EPT/RTPC-like"/>
    <property type="match status" value="1"/>
</dbReference>
<sequence length="113" mass="12010">LQPMAIALAAVADGTSMITENVFEARLAFVEEMIRLGADARTDGHHAVVRGIPQLSSAPVWSSDIRAGAGLVLAGLVADGETEVHDVFHIDRGYRLFVENLLSLGAEIERVGS</sequence>